<reference key="1">
    <citation type="submission" date="2009-07" db="EMBL/GenBank/DDBJ databases">
        <title>Complete sequence of Pectobacterium carotovorum subsp. carotovorum PC1.</title>
        <authorList>
            <consortium name="US DOE Joint Genome Institute"/>
            <person name="Lucas S."/>
            <person name="Copeland A."/>
            <person name="Lapidus A."/>
            <person name="Glavina del Rio T."/>
            <person name="Tice H."/>
            <person name="Bruce D."/>
            <person name="Goodwin L."/>
            <person name="Pitluck S."/>
            <person name="Munk A.C."/>
            <person name="Brettin T."/>
            <person name="Detter J.C."/>
            <person name="Han C."/>
            <person name="Tapia R."/>
            <person name="Larimer F."/>
            <person name="Land M."/>
            <person name="Hauser L."/>
            <person name="Kyrpides N."/>
            <person name="Mikhailova N."/>
            <person name="Balakrishnan V."/>
            <person name="Glasner J."/>
            <person name="Perna N.T."/>
        </authorList>
    </citation>
    <scope>NUCLEOTIDE SEQUENCE [LARGE SCALE GENOMIC DNA]</scope>
    <source>
        <strain>PC1</strain>
    </source>
</reference>
<proteinExistence type="inferred from homology"/>
<accession>C6DG97</accession>
<name>KEFB_PECCP</name>
<feature type="chain" id="PRO_1000215223" description="Glutathione-regulated potassium-efflux system protein KefB">
    <location>
        <begin position="1"/>
        <end position="603"/>
    </location>
</feature>
<feature type="transmembrane region" description="Helical" evidence="1">
    <location>
        <begin position="5"/>
        <end position="25"/>
    </location>
</feature>
<feature type="transmembrane region" description="Helical" evidence="1">
    <location>
        <begin position="29"/>
        <end position="49"/>
    </location>
</feature>
<feature type="transmembrane region" description="Helical" evidence="1">
    <location>
        <begin position="55"/>
        <end position="75"/>
    </location>
</feature>
<feature type="transmembrane region" description="Helical" evidence="1">
    <location>
        <begin position="87"/>
        <end position="107"/>
    </location>
</feature>
<feature type="transmembrane region" description="Helical" evidence="1">
    <location>
        <begin position="115"/>
        <end position="135"/>
    </location>
</feature>
<feature type="transmembrane region" description="Helical" evidence="1">
    <location>
        <begin position="152"/>
        <end position="172"/>
    </location>
</feature>
<feature type="transmembrane region" description="Helical" evidence="1">
    <location>
        <begin position="180"/>
        <end position="202"/>
    </location>
</feature>
<feature type="transmembrane region" description="Helical" evidence="1">
    <location>
        <begin position="207"/>
        <end position="227"/>
    </location>
</feature>
<feature type="transmembrane region" description="Helical" evidence="1">
    <location>
        <begin position="230"/>
        <end position="250"/>
    </location>
</feature>
<feature type="transmembrane region" description="Helical" evidence="1">
    <location>
        <begin position="268"/>
        <end position="288"/>
    </location>
</feature>
<feature type="transmembrane region" description="Helical" evidence="1">
    <location>
        <begin position="291"/>
        <end position="311"/>
    </location>
</feature>
<feature type="transmembrane region" description="Helical" evidence="1">
    <location>
        <begin position="326"/>
        <end position="346"/>
    </location>
</feature>
<feature type="transmembrane region" description="Helical" evidence="1">
    <location>
        <begin position="356"/>
        <end position="376"/>
    </location>
</feature>
<feature type="domain" description="RCK N-terminal" evidence="2">
    <location>
        <begin position="400"/>
        <end position="521"/>
    </location>
</feature>
<evidence type="ECO:0000255" key="1">
    <source>
        <dbReference type="HAMAP-Rule" id="MF_01412"/>
    </source>
</evidence>
<evidence type="ECO:0000255" key="2">
    <source>
        <dbReference type="PROSITE-ProRule" id="PRU00543"/>
    </source>
</evidence>
<keyword id="KW-0050">Antiport</keyword>
<keyword id="KW-0997">Cell inner membrane</keyword>
<keyword id="KW-1003">Cell membrane</keyword>
<keyword id="KW-0406">Ion transport</keyword>
<keyword id="KW-0472">Membrane</keyword>
<keyword id="KW-0630">Potassium</keyword>
<keyword id="KW-0633">Potassium transport</keyword>
<keyword id="KW-0812">Transmembrane</keyword>
<keyword id="KW-1133">Transmembrane helix</keyword>
<keyword id="KW-0813">Transport</keyword>
<protein>
    <recommendedName>
        <fullName evidence="1">Glutathione-regulated potassium-efflux system protein KefB</fullName>
    </recommendedName>
    <alternativeName>
        <fullName evidence="1">K(+)/H(+) antiporter</fullName>
    </alternativeName>
</protein>
<comment type="function">
    <text evidence="1">Pore-forming subunit of a potassium efflux system that confers protection against electrophiles. Catalyzes K(+)/H(+) antiport.</text>
</comment>
<comment type="subunit">
    <text evidence="1">Interacts with the regulatory subunit KefG.</text>
</comment>
<comment type="subcellular location">
    <subcellularLocation>
        <location evidence="1">Cell inner membrane</location>
        <topology evidence="1">Multi-pass membrane protein</topology>
    </subcellularLocation>
</comment>
<comment type="similarity">
    <text evidence="1">Belongs to the monovalent cation:proton antiporter 2 (CPA2) transporter (TC 2.A.37) family. KefB subfamily.</text>
</comment>
<organism>
    <name type="scientific">Pectobacterium carotovorum subsp. carotovorum (strain PC1)</name>
    <dbReference type="NCBI Taxonomy" id="561230"/>
    <lineage>
        <taxon>Bacteria</taxon>
        <taxon>Pseudomonadati</taxon>
        <taxon>Pseudomonadota</taxon>
        <taxon>Gammaproteobacteria</taxon>
        <taxon>Enterobacterales</taxon>
        <taxon>Pectobacteriaceae</taxon>
        <taxon>Pectobacterium</taxon>
    </lineage>
</organism>
<sequence length="603" mass="66573">MESSALLTAGVLFLFVAVVAVPIAARLGIGAVLGYLIAGIAIGPWGLGFIRDVDAILHFSELGVVFLMFIIGLELNPSKLWTLRRSIFGVGAAQVGLSTLLLGGALYLTDFSWQSALIGGVGLAMSSTAMALQLMREKGMNRSESGQLGFSVLLFQDLAVIPALALIPILAGVQGDFGDWERIGLKVAAFLGMLIGGRYLVRPLFRFIAASGVREVFTAAALLLVLGSALFMETLGLSMALGTFIAGILLAESEYRHELEIAIEPFKGLLLGLFFISVGMALNLGILYTHIVKIMVAVLVLVAVKAAVLYFLARVNRMRRSERLQFAGVLSQGGEFAFVLFSAAASFNVLKGEQLPLLLVTVTLSMMTTPLLMQLIDRILARRYNVQDVPDEKPYVEDDEPQVIVVGFGRFGQVISRLLMANKMRITVLERDISAVSLMRSYGYKVYYGDATELELLRSAGADKARSIVITCNAPEDTMEIVHLCQQHFPNLEILARARGRVEAHELLQTGVRHFSRETFSSALELGRKTLVTLGMHPHQAMRAQQHFRRLDMRMLRELMPQLTGDVAQISRVKEARRELEDIFQREMQRERRRPSVWDEDDE</sequence>
<dbReference type="EMBL" id="CP001657">
    <property type="protein sequence ID" value="ACT14860.1"/>
    <property type="molecule type" value="Genomic_DNA"/>
</dbReference>
<dbReference type="RefSeq" id="WP_015841945.1">
    <property type="nucleotide sequence ID" value="NC_012917.1"/>
</dbReference>
<dbReference type="SMR" id="C6DG97"/>
<dbReference type="STRING" id="561230.PC1_3845"/>
<dbReference type="KEGG" id="pct:PC1_3845"/>
<dbReference type="eggNOG" id="COG0475">
    <property type="taxonomic scope" value="Bacteria"/>
</dbReference>
<dbReference type="eggNOG" id="COG1226">
    <property type="taxonomic scope" value="Bacteria"/>
</dbReference>
<dbReference type="HOGENOM" id="CLU_005126_9_3_6"/>
<dbReference type="OrthoDB" id="9781411at2"/>
<dbReference type="Proteomes" id="UP000002736">
    <property type="component" value="Chromosome"/>
</dbReference>
<dbReference type="GO" id="GO:0005886">
    <property type="term" value="C:plasma membrane"/>
    <property type="evidence" value="ECO:0007669"/>
    <property type="project" value="UniProtKB-SubCell"/>
</dbReference>
<dbReference type="GO" id="GO:0015503">
    <property type="term" value="F:glutathione-regulated potassium exporter activity"/>
    <property type="evidence" value="ECO:0007669"/>
    <property type="project" value="UniProtKB-UniRule"/>
</dbReference>
<dbReference type="GO" id="GO:1902600">
    <property type="term" value="P:proton transmembrane transport"/>
    <property type="evidence" value="ECO:0007669"/>
    <property type="project" value="InterPro"/>
</dbReference>
<dbReference type="FunFam" id="1.20.1530.20:FF:000001">
    <property type="entry name" value="Glutathione-regulated potassium-efflux system protein KefB"/>
    <property type="match status" value="1"/>
</dbReference>
<dbReference type="FunFam" id="3.40.50.720:FF:000036">
    <property type="entry name" value="Glutathione-regulated potassium-efflux system protein KefB"/>
    <property type="match status" value="1"/>
</dbReference>
<dbReference type="Gene3D" id="1.20.1530.20">
    <property type="match status" value="1"/>
</dbReference>
<dbReference type="Gene3D" id="3.40.50.720">
    <property type="entry name" value="NAD(P)-binding Rossmann-like Domain"/>
    <property type="match status" value="1"/>
</dbReference>
<dbReference type="HAMAP" id="MF_01412">
    <property type="entry name" value="K_H_efflux_KefB"/>
    <property type="match status" value="1"/>
</dbReference>
<dbReference type="InterPro" id="IPR006153">
    <property type="entry name" value="Cation/H_exchanger_TM"/>
</dbReference>
<dbReference type="InterPro" id="IPR004771">
    <property type="entry name" value="K/H_exchanger"/>
</dbReference>
<dbReference type="InterPro" id="IPR020884">
    <property type="entry name" value="K_H_efflux_KefB"/>
</dbReference>
<dbReference type="InterPro" id="IPR038770">
    <property type="entry name" value="Na+/solute_symporter_sf"/>
</dbReference>
<dbReference type="InterPro" id="IPR036291">
    <property type="entry name" value="NAD(P)-bd_dom_sf"/>
</dbReference>
<dbReference type="InterPro" id="IPR003148">
    <property type="entry name" value="RCK_N"/>
</dbReference>
<dbReference type="NCBIfam" id="TIGR00932">
    <property type="entry name" value="2a37"/>
    <property type="match status" value="1"/>
</dbReference>
<dbReference type="NCBIfam" id="NF002973">
    <property type="entry name" value="PRK03659.1"/>
    <property type="match status" value="1"/>
</dbReference>
<dbReference type="PANTHER" id="PTHR46157">
    <property type="entry name" value="K(+) EFFLUX ANTIPORTER 3, CHLOROPLASTIC"/>
    <property type="match status" value="1"/>
</dbReference>
<dbReference type="PANTHER" id="PTHR46157:SF4">
    <property type="entry name" value="K(+) EFFLUX ANTIPORTER 3, CHLOROPLASTIC"/>
    <property type="match status" value="1"/>
</dbReference>
<dbReference type="Pfam" id="PF00999">
    <property type="entry name" value="Na_H_Exchanger"/>
    <property type="match status" value="1"/>
</dbReference>
<dbReference type="Pfam" id="PF02254">
    <property type="entry name" value="TrkA_N"/>
    <property type="match status" value="1"/>
</dbReference>
<dbReference type="SUPFAM" id="SSF51735">
    <property type="entry name" value="NAD(P)-binding Rossmann-fold domains"/>
    <property type="match status" value="1"/>
</dbReference>
<dbReference type="PROSITE" id="PS51201">
    <property type="entry name" value="RCK_N"/>
    <property type="match status" value="1"/>
</dbReference>
<gene>
    <name evidence="1" type="primary">kefB</name>
    <name type="ordered locus">PC1_3845</name>
</gene>